<organismHost>
    <name type="scientific">Oryza sativa</name>
    <name type="common">Rice</name>
    <dbReference type="NCBI Taxonomy" id="4530"/>
</organismHost>
<organism>
    <name type="scientific">Rice tungro bacilliform virus (isolate Philippines)</name>
    <name type="common">RTBV</name>
    <dbReference type="NCBI Taxonomy" id="10655"/>
    <lineage>
        <taxon>Viruses</taxon>
        <taxon>Riboviria</taxon>
        <taxon>Pararnavirae</taxon>
        <taxon>Artverviricota</taxon>
        <taxon>Revtraviricetes</taxon>
        <taxon>Ortervirales</taxon>
        <taxon>Caulimoviridae</taxon>
        <taxon>Tungrovirus</taxon>
        <taxon>Tungrovirus oryzae</taxon>
    </lineage>
</organism>
<dbReference type="EMBL" id="X57924">
    <property type="protein sequence ID" value="CAA40996.1"/>
    <property type="molecule type" value="Genomic_DNA"/>
</dbReference>
<dbReference type="EMBL" id="M65026">
    <property type="protein sequence ID" value="AAB03093.1"/>
    <property type="molecule type" value="Genomic_DNA"/>
</dbReference>
<dbReference type="PIR" id="B40785">
    <property type="entry name" value="B40785"/>
</dbReference>
<dbReference type="PIR" id="S16667">
    <property type="entry name" value="S16667"/>
</dbReference>
<dbReference type="RefSeq" id="NP_056761.1">
    <property type="nucleotide sequence ID" value="NC_001914.1"/>
</dbReference>
<dbReference type="SMR" id="P27499"/>
<dbReference type="GeneID" id="1489556"/>
<dbReference type="KEGG" id="vg:1489556"/>
<dbReference type="Proteomes" id="UP000002246">
    <property type="component" value="Segment"/>
</dbReference>
<dbReference type="InterPro" id="IPR009417">
    <property type="entry name" value="RTBV_P12"/>
</dbReference>
<dbReference type="Pfam" id="PF06361">
    <property type="entry name" value="RTBV_P12"/>
    <property type="match status" value="1"/>
</dbReference>
<feature type="chain" id="PRO_0000066381" description="Protein P2">
    <location>
        <begin position="1"/>
        <end position="110"/>
    </location>
</feature>
<feature type="region of interest" description="Disordered" evidence="1">
    <location>
        <begin position="72"/>
        <end position="110"/>
    </location>
</feature>
<feature type="compositionally biased region" description="Polar residues" evidence="1">
    <location>
        <begin position="72"/>
        <end position="82"/>
    </location>
</feature>
<feature type="compositionally biased region" description="Basic residues" evidence="1">
    <location>
        <begin position="99"/>
        <end position="110"/>
    </location>
</feature>
<feature type="sequence conflict" description="In Ref. 2; AAB03093." evidence="2" ref="2">
    <original>S</original>
    <variation>T</variation>
    <location>
        <position position="39"/>
    </location>
</feature>
<reference key="1">
    <citation type="journal article" date="1991" name="Nucleic Acids Res.">
        <title>An analysis of the sequence of an infectious clone of rice tungro bacilliform virus, a plant pararetrovirus.</title>
        <authorList>
            <person name="Hay J.M."/>
            <person name="Jones M.C."/>
            <person name="Blakebrough M.L."/>
            <person name="Dasgupta I."/>
            <person name="Davies J.W."/>
            <person name="Hull R."/>
        </authorList>
    </citation>
    <scope>NUCLEOTIDE SEQUENCE [GENOMIC DNA]</scope>
</reference>
<reference key="2">
    <citation type="journal article" date="1991" name="Virology">
        <title>Characterization of the genome of rice tungro bacilliform virus: comparison with Commelina yellow mottle virus and caulimoviruses.</title>
        <authorList>
            <person name="Qu R.D."/>
            <person name="Bhattacharyya M."/>
            <person name="Laco G.S."/>
            <person name="de Kochko A."/>
            <person name="Rao B.L.S."/>
            <person name="Kaniewska M.B."/>
            <person name="Elmer J.S."/>
            <person name="Rochester D.E."/>
            <person name="Smith C.E."/>
            <person name="Beachy R.N."/>
        </authorList>
    </citation>
    <scope>NUCLEOTIDE SEQUENCE [GENOMIC DNA]</scope>
</reference>
<sequence length="110" mass="11911">MSADYPTFKEALEKFKNLESDTAGKDKFNWVFTLENIKSAADVNLASKGLVQLYALQEIDKKINNLTTQVSKLPTTSGSSSAGAIVPAGSNTQGQYKAPPKKGIKRKYPA</sequence>
<accession>P27499</accession>
<accession>P27529</accession>
<name>P2_RTBVP</name>
<evidence type="ECO:0000256" key="1">
    <source>
        <dbReference type="SAM" id="MobiDB-lite"/>
    </source>
</evidence>
<evidence type="ECO:0000305" key="2"/>
<protein>
    <recommendedName>
        <fullName>Protein P2</fullName>
    </recommendedName>
    <alternativeName>
        <fullName>ORF 2</fullName>
    </alternativeName>
    <alternativeName>
        <fullName>P12</fullName>
    </alternativeName>
</protein>
<proteinExistence type="predicted"/>
<keyword id="KW-1185">Reference proteome</keyword>